<accession>E9PZJ8</accession>
<accession>Q6PB36</accession>
<accession>Q8C1G1</accession>
<accession>Q8C707</accession>
<accession>Q8K292</accession>
<evidence type="ECO:0000250" key="1">
    <source>
        <dbReference type="UniProtKB" id="Q8N3C0"/>
    </source>
</evidence>
<evidence type="ECO:0000255" key="2"/>
<evidence type="ECO:0000255" key="3">
    <source>
        <dbReference type="PROSITE-ProRule" id="PRU00541"/>
    </source>
</evidence>
<evidence type="ECO:0000255" key="4">
    <source>
        <dbReference type="PROSITE-ProRule" id="PRU00542"/>
    </source>
</evidence>
<evidence type="ECO:0000303" key="5">
    <source>
    </source>
</evidence>
<evidence type="ECO:0000305" key="6"/>
<evidence type="ECO:0007744" key="7">
    <source>
    </source>
</evidence>
<proteinExistence type="evidence at protein level"/>
<gene>
    <name type="primary">Ascc3</name>
</gene>
<sequence length="2198" mass="250557">MALPRLTGALRSFSNVTKQDNYNEEVADLKLKRSKLHEQVLDFGLTWKKIVKFLNEKLEKNKMQNINEDLKDILQAAKQIVGTDNGREAIESGAAFLFMTFHMTDSVGYMETKAIRQTFGPFPSSSATSACNATNRIISHFSQDDLTAFVQMAENPCNDRVVFGKNLAFSFDMYDLDHFDELPINGESQKTISLDYKKFLNEQFQEPYTPELKPVEKTNGSLLWCEVEKYLNATLKEMTEAARVEDLCCTLYDMLASAKSGDELQDELFELLGPEGLDLIEKLLQNRITIVDRFLNSSSDHKFQVLQDSCKKILGENSKPNYGCQVTIQSEQEKQLMKQYRREEKRIARREKKAGEDGEVSGEGVLPFDPKELRIQREHALLNARNAPILGRQRDVEFEKIRYPHVYDSQAQARETSAFIAGAKMILPEGIQRENTKLYEEVRIPYGEPMPVGFEEKPVYIKDLDEVGQLAFKGMKRLNRIQSIVFETAYNTNENMLICAPTGAGKTNIAMLTILHEIRQHFHQGVIKKNEFKIVYVAPMKALAAEMTNYFSKRLEPLGIVVKELTGDMQLSKSEILRTQMLVTTPEKWDVVTRKSVGDVALSQIVKLLILDEVHLLHEDRGPVLESIVARTLRQVESTQSMIRILGLSATLPNYLDVATFLHVNPYIGLFYFDGRFRPVPLGQTFLGIKSTNKMQQLNNMDEVCYESVLKQVKAGHQVMVFVHARNATVRTAMSLIERAKNSGQISCFLPTEGPEYGHALKQVQKSRNKQVRELFSDGFSIHHAGMLRQDRNLVENLFSNGHIKVLVCTATLAWGVNLPAHAVVIKGTQIYAAKRGSFVDLGILDVMQIFGRAGRPQFDKFGEGIIITTHDKLSHYLSLLTQQNPIESQFLESLADNLNAEIALGTVTNVEEAVRWMSYTYLYVRMRANPLAYGISHKAYQIDPTLRKHREQLLIEVGQKLDKAKMIRFEERTGYFSSTDLGRTASHFYIKYNTIETFNELFDAHKTEGDIFAIVSKAEEFDQIKVREEEIEELDALLNNFCELSAPGGVENSYGKINILLQTYISRGEMDSFSLISDSAYVAQNAARIVRALFEIALRKRWPTMTYRLLNLSKVIDKRLWGWASPLRQFSVLPPHILTRLEEKNLTVDKLKDMRKDEIGHILHHVNIGLKVKQCVHQIPSVTMEASIQPITRTVLRVSLNIHPDFSWNDQVHGTVGEPWWIWVEDPTNDHIYHSEYFLALKKQVINKEAQLLVFTIPIFEPLPSQYYIRAVSDRWLGAEAVCIINFQHLILPERHPPHTELLDLQPLPITALGCKAYEALYNFSHFNPVQTQIFHTLYHTDCNVLLGAPTGSGKTVAAELAIFRVFNKYPTSKAVYIAPLKALVRERMDDWKIRIEEKLGKKVIELTGDVTPDMKSIAKADLIVTTPEKWDGVSRSWQNRSYVQQVNILIIDEIHLLGEERGPVLEVIVSRTNFISSHTEKPVRIVGLSTALANARDLADWLNIKQMGLFNFRPSVRPVPLEVHIQGFPGQHYCPRMASMNKPAFQAIRSHSPAKPVLIFVSSRRQTRLTALELIAFLATEEDPKQWLNMDEQEMDNIIGTVRDSNLKLTLAFGIGMHHAGLHERDRKTVEELFVNCKVQVLIATSTLAWGVNFPAHLVIIKGTEYYDGKTRRYVDFPITDVLQMMGRAGRPQFDDQGKAVILVHDIKKDFYKKFLYEPFPVESSLLGVLSDHLNAEIAGGTITSKQDAMDYITWTYFFRRLIMNPSYYSLGDVSQDSINKFLSHLIGQSLVELELSHCIEVGEDNRTIEPLTCGRIASYYYLKHKTVKMFKDRLKPECSTEELLSILSDAEEYTDLPVRHNEDHTNNELAKCLPIELNPHSFDSPHTKAHLLLQAHLSRAMLPCPDYDTDTKTVLDQALRVCQAMLDVAASQGWLVTVLNITHLIQMVIQGRWLKDSSLLTIPNIEQHHLHLFRKWKPPVKSSHAKCRTSIECLPELIHACEGKDHVFSSMVEKELQPAKTKQAWNFLSRLPVINVGISVKGSWDDLVEGHNELSISTLTADKRDENKWIKLHADQEYVLQVSLQRVHFGLPKGKHENHAVTPRFPKLKDEGWFLILGEVDKRELMAVKRVGFVRTHHDASISFFTPETPGRYIFTLYLMSDCYLGLDQQYDIYLNVIKANISTKDSDVFTDLSV</sequence>
<protein>
    <recommendedName>
        <fullName>Activating signal cointegrator 1 complex subunit 3</fullName>
        <ecNumber evidence="1">5.6.2.4</ecNumber>
    </recommendedName>
</protein>
<reference key="1">
    <citation type="journal article" date="2009" name="PLoS Biol.">
        <title>Lineage-specific biology revealed by a finished genome assembly of the mouse.</title>
        <authorList>
            <person name="Church D.M."/>
            <person name="Goodstadt L."/>
            <person name="Hillier L.W."/>
            <person name="Zody M.C."/>
            <person name="Goldstein S."/>
            <person name="She X."/>
            <person name="Bult C.J."/>
            <person name="Agarwala R."/>
            <person name="Cherry J.L."/>
            <person name="DiCuccio M."/>
            <person name="Hlavina W."/>
            <person name="Kapustin Y."/>
            <person name="Meric P."/>
            <person name="Maglott D."/>
            <person name="Birtle Z."/>
            <person name="Marques A.C."/>
            <person name="Graves T."/>
            <person name="Zhou S."/>
            <person name="Teague B."/>
            <person name="Potamousis K."/>
            <person name="Churas C."/>
            <person name="Place M."/>
            <person name="Herschleb J."/>
            <person name="Runnheim R."/>
            <person name="Forrest D."/>
            <person name="Amos-Landgraf J."/>
            <person name="Schwartz D.C."/>
            <person name="Cheng Z."/>
            <person name="Lindblad-Toh K."/>
            <person name="Eichler E.E."/>
            <person name="Ponting C.P."/>
        </authorList>
    </citation>
    <scope>NUCLEOTIDE SEQUENCE [LARGE SCALE GENOMIC DNA]</scope>
    <source>
        <strain>C57BL/6J</strain>
    </source>
</reference>
<reference key="2">
    <citation type="journal article" date="2004" name="Genome Res.">
        <title>The status, quality, and expansion of the NIH full-length cDNA project: the Mammalian Gene Collection (MGC).</title>
        <authorList>
            <consortium name="The MGC Project Team"/>
        </authorList>
    </citation>
    <scope>NUCLEOTIDE SEQUENCE [LARGE SCALE MRNA] (ISOFORM 2)</scope>
    <source>
        <strain>C57BL/6J</strain>
        <strain>FVB/N</strain>
        <tissue>Brain</tissue>
        <tissue>Mammary tumor</tissue>
    </source>
</reference>
<reference key="3">
    <citation type="journal article" date="2005" name="Science">
        <title>The transcriptional landscape of the mammalian genome.</title>
        <authorList>
            <person name="Carninci P."/>
            <person name="Kasukawa T."/>
            <person name="Katayama S."/>
            <person name="Gough J."/>
            <person name="Frith M.C."/>
            <person name="Maeda N."/>
            <person name="Oyama R."/>
            <person name="Ravasi T."/>
            <person name="Lenhard B."/>
            <person name="Wells C."/>
            <person name="Kodzius R."/>
            <person name="Shimokawa K."/>
            <person name="Bajic V.B."/>
            <person name="Brenner S.E."/>
            <person name="Batalov S."/>
            <person name="Forrest A.R."/>
            <person name="Zavolan M."/>
            <person name="Davis M.J."/>
            <person name="Wilming L.G."/>
            <person name="Aidinis V."/>
            <person name="Allen J.E."/>
            <person name="Ambesi-Impiombato A."/>
            <person name="Apweiler R."/>
            <person name="Aturaliya R.N."/>
            <person name="Bailey T.L."/>
            <person name="Bansal M."/>
            <person name="Baxter L."/>
            <person name="Beisel K.W."/>
            <person name="Bersano T."/>
            <person name="Bono H."/>
            <person name="Chalk A.M."/>
            <person name="Chiu K.P."/>
            <person name="Choudhary V."/>
            <person name="Christoffels A."/>
            <person name="Clutterbuck D.R."/>
            <person name="Crowe M.L."/>
            <person name="Dalla E."/>
            <person name="Dalrymple B.P."/>
            <person name="de Bono B."/>
            <person name="Della Gatta G."/>
            <person name="di Bernardo D."/>
            <person name="Down T."/>
            <person name="Engstrom P."/>
            <person name="Fagiolini M."/>
            <person name="Faulkner G."/>
            <person name="Fletcher C.F."/>
            <person name="Fukushima T."/>
            <person name="Furuno M."/>
            <person name="Futaki S."/>
            <person name="Gariboldi M."/>
            <person name="Georgii-Hemming P."/>
            <person name="Gingeras T.R."/>
            <person name="Gojobori T."/>
            <person name="Green R.E."/>
            <person name="Gustincich S."/>
            <person name="Harbers M."/>
            <person name="Hayashi Y."/>
            <person name="Hensch T.K."/>
            <person name="Hirokawa N."/>
            <person name="Hill D."/>
            <person name="Huminiecki L."/>
            <person name="Iacono M."/>
            <person name="Ikeo K."/>
            <person name="Iwama A."/>
            <person name="Ishikawa T."/>
            <person name="Jakt M."/>
            <person name="Kanapin A."/>
            <person name="Katoh M."/>
            <person name="Kawasawa Y."/>
            <person name="Kelso J."/>
            <person name="Kitamura H."/>
            <person name="Kitano H."/>
            <person name="Kollias G."/>
            <person name="Krishnan S.P."/>
            <person name="Kruger A."/>
            <person name="Kummerfeld S.K."/>
            <person name="Kurochkin I.V."/>
            <person name="Lareau L.F."/>
            <person name="Lazarevic D."/>
            <person name="Lipovich L."/>
            <person name="Liu J."/>
            <person name="Liuni S."/>
            <person name="McWilliam S."/>
            <person name="Madan Babu M."/>
            <person name="Madera M."/>
            <person name="Marchionni L."/>
            <person name="Matsuda H."/>
            <person name="Matsuzawa S."/>
            <person name="Miki H."/>
            <person name="Mignone F."/>
            <person name="Miyake S."/>
            <person name="Morris K."/>
            <person name="Mottagui-Tabar S."/>
            <person name="Mulder N."/>
            <person name="Nakano N."/>
            <person name="Nakauchi H."/>
            <person name="Ng P."/>
            <person name="Nilsson R."/>
            <person name="Nishiguchi S."/>
            <person name="Nishikawa S."/>
            <person name="Nori F."/>
            <person name="Ohara O."/>
            <person name="Okazaki Y."/>
            <person name="Orlando V."/>
            <person name="Pang K.C."/>
            <person name="Pavan W.J."/>
            <person name="Pavesi G."/>
            <person name="Pesole G."/>
            <person name="Petrovsky N."/>
            <person name="Piazza S."/>
            <person name="Reed J."/>
            <person name="Reid J.F."/>
            <person name="Ring B.Z."/>
            <person name="Ringwald M."/>
            <person name="Rost B."/>
            <person name="Ruan Y."/>
            <person name="Salzberg S.L."/>
            <person name="Sandelin A."/>
            <person name="Schneider C."/>
            <person name="Schoenbach C."/>
            <person name="Sekiguchi K."/>
            <person name="Semple C.A."/>
            <person name="Seno S."/>
            <person name="Sessa L."/>
            <person name="Sheng Y."/>
            <person name="Shibata Y."/>
            <person name="Shimada H."/>
            <person name="Shimada K."/>
            <person name="Silva D."/>
            <person name="Sinclair B."/>
            <person name="Sperling S."/>
            <person name="Stupka E."/>
            <person name="Sugiura K."/>
            <person name="Sultana R."/>
            <person name="Takenaka Y."/>
            <person name="Taki K."/>
            <person name="Tammoja K."/>
            <person name="Tan S.L."/>
            <person name="Tang S."/>
            <person name="Taylor M.S."/>
            <person name="Tegner J."/>
            <person name="Teichmann S.A."/>
            <person name="Ueda H.R."/>
            <person name="van Nimwegen E."/>
            <person name="Verardo R."/>
            <person name="Wei C.L."/>
            <person name="Yagi K."/>
            <person name="Yamanishi H."/>
            <person name="Zabarovsky E."/>
            <person name="Zhu S."/>
            <person name="Zimmer A."/>
            <person name="Hide W."/>
            <person name="Bult C."/>
            <person name="Grimmond S.M."/>
            <person name="Teasdale R.D."/>
            <person name="Liu E.T."/>
            <person name="Brusic V."/>
            <person name="Quackenbush J."/>
            <person name="Wahlestedt C."/>
            <person name="Mattick J.S."/>
            <person name="Hume D.A."/>
            <person name="Kai C."/>
            <person name="Sasaki D."/>
            <person name="Tomaru Y."/>
            <person name="Fukuda S."/>
            <person name="Kanamori-Katayama M."/>
            <person name="Suzuki M."/>
            <person name="Aoki J."/>
            <person name="Arakawa T."/>
            <person name="Iida J."/>
            <person name="Imamura K."/>
            <person name="Itoh M."/>
            <person name="Kato T."/>
            <person name="Kawaji H."/>
            <person name="Kawagashira N."/>
            <person name="Kawashima T."/>
            <person name="Kojima M."/>
            <person name="Kondo S."/>
            <person name="Konno H."/>
            <person name="Nakano K."/>
            <person name="Ninomiya N."/>
            <person name="Nishio T."/>
            <person name="Okada M."/>
            <person name="Plessy C."/>
            <person name="Shibata K."/>
            <person name="Shiraki T."/>
            <person name="Suzuki S."/>
            <person name="Tagami M."/>
            <person name="Waki K."/>
            <person name="Watahiki A."/>
            <person name="Okamura-Oho Y."/>
            <person name="Suzuki H."/>
            <person name="Kawai J."/>
            <person name="Hayashizaki Y."/>
        </authorList>
    </citation>
    <scope>NUCLEOTIDE SEQUENCE [LARGE SCALE MRNA] OF 1-331 AND 2125-2198</scope>
    <source>
        <strain>C57BL/6J</strain>
        <tissue>Kidney</tissue>
        <tissue>Thymus</tissue>
    </source>
</reference>
<reference key="4">
    <citation type="journal article" date="2010" name="Cell">
        <title>A tissue-specific atlas of mouse protein phosphorylation and expression.</title>
        <authorList>
            <person name="Huttlin E.L."/>
            <person name="Jedrychowski M.P."/>
            <person name="Elias J.E."/>
            <person name="Goswami T."/>
            <person name="Rad R."/>
            <person name="Beausoleil S.A."/>
            <person name="Villen J."/>
            <person name="Haas W."/>
            <person name="Sowa M.E."/>
            <person name="Gygi S.P."/>
        </authorList>
    </citation>
    <scope>IDENTIFICATION BY MASS SPECTROMETRY [LARGE SCALE ANALYSIS]</scope>
    <source>
        <tissue>Brain</tissue>
        <tissue>Brown adipose tissue</tissue>
        <tissue>Heart</tissue>
        <tissue>Kidney</tissue>
        <tissue>Liver</tissue>
        <tissue>Lung</tissue>
        <tissue>Pancreas</tissue>
        <tissue>Spleen</tissue>
        <tissue>Testis</tissue>
    </source>
</reference>
<reference key="5">
    <citation type="journal article" date="2013" name="Mol. Cell">
        <title>SIRT5-mediated lysine desuccinylation impacts diverse metabolic pathways.</title>
        <authorList>
            <person name="Park J."/>
            <person name="Chen Y."/>
            <person name="Tishkoff D.X."/>
            <person name="Peng C."/>
            <person name="Tan M."/>
            <person name="Dai L."/>
            <person name="Xie Z."/>
            <person name="Zhang Y."/>
            <person name="Zwaans B.M."/>
            <person name="Skinner M.E."/>
            <person name="Lombard D.B."/>
            <person name="Zhao Y."/>
        </authorList>
    </citation>
    <scope>ACETYLATION [LARGE SCALE ANALYSIS] AT LYS-573</scope>
    <scope>IDENTIFICATION BY MASS SPECTROMETRY [LARGE SCALE ANALYSIS]</scope>
    <source>
        <tissue>Embryonic fibroblast</tissue>
    </source>
</reference>
<organism>
    <name type="scientific">Mus musculus</name>
    <name type="common">Mouse</name>
    <dbReference type="NCBI Taxonomy" id="10090"/>
    <lineage>
        <taxon>Eukaryota</taxon>
        <taxon>Metazoa</taxon>
        <taxon>Chordata</taxon>
        <taxon>Craniata</taxon>
        <taxon>Vertebrata</taxon>
        <taxon>Euteleostomi</taxon>
        <taxon>Mammalia</taxon>
        <taxon>Eutheria</taxon>
        <taxon>Euarchontoglires</taxon>
        <taxon>Glires</taxon>
        <taxon>Rodentia</taxon>
        <taxon>Myomorpha</taxon>
        <taxon>Muroidea</taxon>
        <taxon>Muridae</taxon>
        <taxon>Murinae</taxon>
        <taxon>Mus</taxon>
        <taxon>Mus</taxon>
    </lineage>
</organism>
<comment type="function">
    <text evidence="1">ATPase involved both in DNA repair and rescue of stalled ribosomes. 3'-5' DNA helicase involved in repair of alkylated DNA: promotes DNA unwinding to generate single-stranded substrate needed for ALKBH3, enabling ALKBH3 to process alkylated N3-methylcytosine (3mC) within double-stranded regions. Also involved in activation of the ribosome quality control (RQC) pathway, a pathway that degrades nascent peptide chains during problematic translation. Drives the splitting of stalled ribosomes that are ubiquitinated in a ZNF598-dependent manner, as part of the ribosome quality control trigger (RQT) complex. Part of the ASC-1 complex that enhances NF-kappa-B, SRF and AP1 transactivation.</text>
</comment>
<comment type="catalytic activity">
    <reaction evidence="1">
        <text>Couples ATP hydrolysis with the unwinding of duplex DNA by translocating in the 3'-5' direction.</text>
        <dbReference type="EC" id="5.6.2.4"/>
    </reaction>
</comment>
<comment type="catalytic activity">
    <reaction evidence="1">
        <text>ATP + H2O = ADP + phosphate + H(+)</text>
        <dbReference type="Rhea" id="RHEA:13065"/>
        <dbReference type="ChEBI" id="CHEBI:15377"/>
        <dbReference type="ChEBI" id="CHEBI:15378"/>
        <dbReference type="ChEBI" id="CHEBI:30616"/>
        <dbReference type="ChEBI" id="CHEBI:43474"/>
        <dbReference type="ChEBI" id="CHEBI:456216"/>
        <dbReference type="EC" id="5.6.2.4"/>
    </reaction>
</comment>
<comment type="subunit">
    <text evidence="1">Identified in the ASCC complex that contains ASCC1, ASCC2 and ASCC3. Functions as a scaffolding subunit that interacts directly with both ASCC1 and ASCC2. Interacts directly with ALKBH3, and thereby recruits ALKBH3 to the ASCC complex. Part of the ASC-1/TRIP4 complex, that contains TRIP4, ASCC1, ASCC2 and ASCC3. Part of the RQT (ribosome quality control trigger) complex, that contains ASCC2, ASCC3 and TRIP4. Associates with ribosomes; recruited to collided ribosomes. Interacts with ZCCHC4. Interacts with ZNF598. Interacts with RPS3.</text>
</comment>
<comment type="subcellular location">
    <subcellularLocation>
        <location evidence="1">Nucleus</location>
    </subcellularLocation>
    <subcellularLocation>
        <location evidence="1">Nucleus speckle</location>
    </subcellularLocation>
    <subcellularLocation>
        <location evidence="1">Cytoplasm</location>
        <location evidence="1">Cytosol</location>
    </subcellularLocation>
    <text evidence="1">Colocalizes with ALKBH3 and ASCC2 in nuclear foci when cells have been exposed to alkylating agents that cause DNA damage.</text>
</comment>
<comment type="alternative products">
    <event type="alternative splicing"/>
    <isoform>
        <id>E9PZJ8-1</id>
        <name>1</name>
        <sequence type="displayed"/>
    </isoform>
    <isoform>
        <id>E9PZJ8-2</id>
        <name>2</name>
        <sequence type="described" ref="VSP_042999"/>
    </isoform>
</comment>
<comment type="similarity">
    <text evidence="6">Belongs to the helicase family.</text>
</comment>
<comment type="sequence caution" evidence="6">
    <conflict type="erroneous initiation">
        <sequence resource="EMBL-CDS" id="AAH32189"/>
    </conflict>
    <text>Truncated N-terminus.</text>
</comment>
<feature type="chain" id="PRO_0000416915" description="Activating signal cointegrator 1 complex subunit 3">
    <location>
        <begin position="1"/>
        <end position="2198"/>
    </location>
</feature>
<feature type="domain" description="Helicase ATP-binding 1" evidence="3">
    <location>
        <begin position="487"/>
        <end position="670"/>
    </location>
</feature>
<feature type="domain" description="Helicase C-terminal 1" evidence="4">
    <location>
        <begin position="697"/>
        <end position="915"/>
    </location>
</feature>
<feature type="domain" description="SEC63 1">
    <location>
        <begin position="979"/>
        <end position="1288"/>
    </location>
</feature>
<feature type="domain" description="Helicase ATP-binding 2" evidence="3">
    <location>
        <begin position="1337"/>
        <end position="1512"/>
    </location>
</feature>
<feature type="domain" description="Helicase C-terminal 2" evidence="4">
    <location>
        <begin position="1545"/>
        <end position="1740"/>
    </location>
</feature>
<feature type="domain" description="SEC63 2">
    <location>
        <begin position="1813"/>
        <end position="2177"/>
    </location>
</feature>
<feature type="coiled-coil region" evidence="2">
    <location>
        <begin position="18"/>
        <end position="81"/>
    </location>
</feature>
<feature type="coiled-coil region" evidence="2">
    <location>
        <begin position="328"/>
        <end position="356"/>
    </location>
</feature>
<feature type="short sequence motif" description="DEVH box">
    <location>
        <begin position="612"/>
        <end position="615"/>
    </location>
</feature>
<feature type="short sequence motif" description="DEIH box">
    <location>
        <begin position="1454"/>
        <end position="1457"/>
    </location>
</feature>
<feature type="binding site" evidence="3">
    <location>
        <begin position="500"/>
        <end position="507"/>
    </location>
    <ligand>
        <name>ATP</name>
        <dbReference type="ChEBI" id="CHEBI:30616"/>
    </ligand>
</feature>
<feature type="binding site" evidence="3">
    <location>
        <begin position="1350"/>
        <end position="1357"/>
    </location>
    <ligand>
        <name>ATP</name>
        <dbReference type="ChEBI" id="CHEBI:30616"/>
    </ligand>
</feature>
<feature type="modified residue" description="Phosphoserine" evidence="1">
    <location>
        <position position="12"/>
    </location>
</feature>
<feature type="modified residue" description="N6-acetyllysine" evidence="7">
    <location>
        <position position="573"/>
    </location>
</feature>
<feature type="splice variant" id="VSP_042999" description="In isoform 2." evidence="5">
    <location>
        <begin position="1"/>
        <end position="1070"/>
    </location>
</feature>
<feature type="sequence conflict" description="In Ref. 2; AAH59917." evidence="6" ref="2">
    <original>R</original>
    <variation>L</variation>
    <location>
        <position position="1818"/>
    </location>
</feature>
<dbReference type="EC" id="5.6.2.4" evidence="1"/>
<dbReference type="EMBL" id="AC137877">
    <property type="status" value="NOT_ANNOTATED_CDS"/>
    <property type="molecule type" value="Genomic_DNA"/>
</dbReference>
<dbReference type="EMBL" id="AC153529">
    <property type="status" value="NOT_ANNOTATED_CDS"/>
    <property type="molecule type" value="Genomic_DNA"/>
</dbReference>
<dbReference type="EMBL" id="AC159114">
    <property type="status" value="NOT_ANNOTATED_CDS"/>
    <property type="molecule type" value="Genomic_DNA"/>
</dbReference>
<dbReference type="EMBL" id="BC032189">
    <property type="protein sequence ID" value="AAH32189.1"/>
    <property type="status" value="ALT_INIT"/>
    <property type="molecule type" value="mRNA"/>
</dbReference>
<dbReference type="EMBL" id="BC059917">
    <property type="protein sequence ID" value="AAH59917.1"/>
    <property type="molecule type" value="mRNA"/>
</dbReference>
<dbReference type="EMBL" id="AK021027">
    <property type="protein sequence ID" value="BAC25644.1"/>
    <property type="molecule type" value="mRNA"/>
</dbReference>
<dbReference type="EMBL" id="AK052745">
    <property type="protein sequence ID" value="BAC35127.1"/>
    <property type="molecule type" value="mRNA"/>
</dbReference>
<dbReference type="CCDS" id="CCDS48555.1">
    <molecule id="E9PZJ8-1"/>
</dbReference>
<dbReference type="RefSeq" id="NP_932124.2">
    <molecule id="E9PZJ8-1"/>
    <property type="nucleotide sequence ID" value="NM_198007.2"/>
</dbReference>
<dbReference type="SMR" id="E9PZJ8"/>
<dbReference type="BioGRID" id="219071">
    <property type="interactions" value="7"/>
</dbReference>
<dbReference type="FunCoup" id="E9PZJ8">
    <property type="interactions" value="3511"/>
</dbReference>
<dbReference type="IntAct" id="E9PZJ8">
    <property type="interactions" value="2"/>
</dbReference>
<dbReference type="MINT" id="E9PZJ8"/>
<dbReference type="STRING" id="10090.ENSMUSP00000036726"/>
<dbReference type="GlyGen" id="E9PZJ8">
    <property type="glycosylation" value="1 site"/>
</dbReference>
<dbReference type="iPTMnet" id="E9PZJ8"/>
<dbReference type="PhosphoSitePlus" id="E9PZJ8"/>
<dbReference type="SwissPalm" id="E9PZJ8"/>
<dbReference type="jPOST" id="E9PZJ8"/>
<dbReference type="PaxDb" id="10090-ENSMUSP00000036726"/>
<dbReference type="PeptideAtlas" id="E9PZJ8"/>
<dbReference type="ProteomicsDB" id="281809">
    <molecule id="E9PZJ8-1"/>
</dbReference>
<dbReference type="ProteomicsDB" id="281810">
    <molecule id="E9PZJ8-2"/>
</dbReference>
<dbReference type="Pumba" id="E9PZJ8"/>
<dbReference type="Antibodypedia" id="32044">
    <property type="antibodies" value="93 antibodies from 19 providers"/>
</dbReference>
<dbReference type="Ensembl" id="ENSMUST00000035606.10">
    <molecule id="E9PZJ8-1"/>
    <property type="protein sequence ID" value="ENSMUSP00000036726.9"/>
    <property type="gene ID" value="ENSMUSG00000038774.10"/>
</dbReference>
<dbReference type="GeneID" id="77987"/>
<dbReference type="KEGG" id="mmu:77987"/>
<dbReference type="UCSC" id="uc007fak.2">
    <molecule id="E9PZJ8-1"/>
    <property type="organism name" value="mouse"/>
</dbReference>
<dbReference type="AGR" id="MGI:1925237"/>
<dbReference type="CTD" id="10973"/>
<dbReference type="MGI" id="MGI:1925237">
    <property type="gene designation" value="Ascc3"/>
</dbReference>
<dbReference type="VEuPathDB" id="HostDB:ENSMUSG00000038774"/>
<dbReference type="eggNOG" id="KOG0952">
    <property type="taxonomic scope" value="Eukaryota"/>
</dbReference>
<dbReference type="GeneTree" id="ENSGT00940000155377"/>
<dbReference type="HOGENOM" id="CLU_000335_2_1_1"/>
<dbReference type="InParanoid" id="E9PZJ8"/>
<dbReference type="OMA" id="MCSATEF"/>
<dbReference type="OrthoDB" id="5575at2759"/>
<dbReference type="PhylomeDB" id="E9PZJ8"/>
<dbReference type="TreeFam" id="TF105778"/>
<dbReference type="BioGRID-ORCS" id="77987">
    <property type="hits" value="14 hits in 115 CRISPR screens"/>
</dbReference>
<dbReference type="ChiTaRS" id="Ascc3">
    <property type="organism name" value="mouse"/>
</dbReference>
<dbReference type="PRO" id="PR:E9PZJ8"/>
<dbReference type="Proteomes" id="UP000000589">
    <property type="component" value="Chromosome 10"/>
</dbReference>
<dbReference type="RNAct" id="E9PZJ8">
    <property type="molecule type" value="protein"/>
</dbReference>
<dbReference type="Bgee" id="ENSMUSG00000038774">
    <property type="expression patterns" value="Expressed in spermatid and 222 other cell types or tissues"/>
</dbReference>
<dbReference type="ExpressionAtlas" id="E9PZJ8">
    <property type="expression patterns" value="baseline and differential"/>
</dbReference>
<dbReference type="GO" id="GO:0005829">
    <property type="term" value="C:cytosol"/>
    <property type="evidence" value="ECO:0000250"/>
    <property type="project" value="UniProtKB"/>
</dbReference>
<dbReference type="GO" id="GO:0022626">
    <property type="term" value="C:cytosolic ribosome"/>
    <property type="evidence" value="ECO:0007669"/>
    <property type="project" value="Ensembl"/>
</dbReference>
<dbReference type="GO" id="GO:1990391">
    <property type="term" value="C:DNA repair complex"/>
    <property type="evidence" value="ECO:0007669"/>
    <property type="project" value="Ensembl"/>
</dbReference>
<dbReference type="GO" id="GO:0016607">
    <property type="term" value="C:nuclear speck"/>
    <property type="evidence" value="ECO:0007669"/>
    <property type="project" value="UniProtKB-SubCell"/>
</dbReference>
<dbReference type="GO" id="GO:0005634">
    <property type="term" value="C:nucleus"/>
    <property type="evidence" value="ECO:0000250"/>
    <property type="project" value="UniProtKB"/>
</dbReference>
<dbReference type="GO" id="GO:0180022">
    <property type="term" value="C:RQC-trigger complex"/>
    <property type="evidence" value="ECO:0007669"/>
    <property type="project" value="Ensembl"/>
</dbReference>
<dbReference type="GO" id="GO:0043138">
    <property type="term" value="F:3'-5' DNA helicase activity"/>
    <property type="evidence" value="ECO:0000250"/>
    <property type="project" value="UniProtKB"/>
</dbReference>
<dbReference type="GO" id="GO:0005524">
    <property type="term" value="F:ATP binding"/>
    <property type="evidence" value="ECO:0007669"/>
    <property type="project" value="UniProtKB-KW"/>
</dbReference>
<dbReference type="GO" id="GO:0016887">
    <property type="term" value="F:ATP hydrolysis activity"/>
    <property type="evidence" value="ECO:0000250"/>
    <property type="project" value="UniProtKB"/>
</dbReference>
<dbReference type="GO" id="GO:0003676">
    <property type="term" value="F:nucleic acid binding"/>
    <property type="evidence" value="ECO:0007669"/>
    <property type="project" value="InterPro"/>
</dbReference>
<dbReference type="GO" id="GO:0006307">
    <property type="term" value="P:DNA alkylation repair"/>
    <property type="evidence" value="ECO:0000250"/>
    <property type="project" value="UniProtKB"/>
</dbReference>
<dbReference type="GO" id="GO:0072344">
    <property type="term" value="P:rescue of stalled ribosome"/>
    <property type="evidence" value="ECO:0000250"/>
    <property type="project" value="UniProtKB"/>
</dbReference>
<dbReference type="GO" id="GO:0032790">
    <property type="term" value="P:ribosome disassembly"/>
    <property type="evidence" value="ECO:0000250"/>
    <property type="project" value="UniProtKB"/>
</dbReference>
<dbReference type="GO" id="GO:1990116">
    <property type="term" value="P:ribosome-associated ubiquitin-dependent protein catabolic process"/>
    <property type="evidence" value="ECO:0000250"/>
    <property type="project" value="UniProtKB"/>
</dbReference>
<dbReference type="CDD" id="cd18020">
    <property type="entry name" value="DEXHc_ASCC3_1"/>
    <property type="match status" value="1"/>
</dbReference>
<dbReference type="CDD" id="cd18022">
    <property type="entry name" value="DEXHc_ASCC3_2"/>
    <property type="match status" value="1"/>
</dbReference>
<dbReference type="CDD" id="cd18795">
    <property type="entry name" value="SF2_C_Ski2"/>
    <property type="match status" value="2"/>
</dbReference>
<dbReference type="FunFam" id="3.40.50.300:FF:000198">
    <property type="entry name" value="Activating signal cointegrator 1 complex subunit"/>
    <property type="match status" value="1"/>
</dbReference>
<dbReference type="FunFam" id="1.10.3380.10:FF:000002">
    <property type="entry name" value="Activating signal cointegrator 1 complex subunit 3"/>
    <property type="match status" value="1"/>
</dbReference>
<dbReference type="FunFam" id="3.40.50.300:FF:000231">
    <property type="entry name" value="Activating signal cointegrator 1 complex subunit 3"/>
    <property type="match status" value="1"/>
</dbReference>
<dbReference type="FunFam" id="1.10.150.20:FF:000028">
    <property type="entry name" value="activating signal cointegrator 1 complex subunit 3"/>
    <property type="match status" value="1"/>
</dbReference>
<dbReference type="FunFam" id="2.60.40.150:FF:000113">
    <property type="entry name" value="activating signal cointegrator 1 complex subunit 3"/>
    <property type="match status" value="1"/>
</dbReference>
<dbReference type="FunFam" id="2.60.40.150:FF:000004">
    <property type="entry name" value="RNA helicase, activating signal cointegrator 1"/>
    <property type="match status" value="1"/>
</dbReference>
<dbReference type="FunFam" id="3.40.50.300:FF:000102">
    <property type="entry name" value="RNA helicase, activating signal cointegrator 1"/>
    <property type="match status" value="1"/>
</dbReference>
<dbReference type="FunFam" id="1.10.10.10:FF:000012">
    <property type="entry name" value="U5 small nuclear ribonucleoprotein helicase"/>
    <property type="match status" value="1"/>
</dbReference>
<dbReference type="FunFam" id="1.10.10.10:FF:000024">
    <property type="entry name" value="U5 small nuclear ribonucleoprotein helicase"/>
    <property type="match status" value="1"/>
</dbReference>
<dbReference type="FunFam" id="1.10.3380.10:FF:000001">
    <property type="entry name" value="U5 small nuclear ribonucleoprotein helicase"/>
    <property type="match status" value="1"/>
</dbReference>
<dbReference type="FunFam" id="3.40.50.300:FF:000062">
    <property type="entry name" value="U5 small nuclear ribonucleoprotein helicase"/>
    <property type="match status" value="1"/>
</dbReference>
<dbReference type="Gene3D" id="1.10.150.20">
    <property type="entry name" value="5' to 3' exonuclease, C-terminal subdomain"/>
    <property type="match status" value="1"/>
</dbReference>
<dbReference type="Gene3D" id="2.60.40.150">
    <property type="entry name" value="C2 domain"/>
    <property type="match status" value="2"/>
</dbReference>
<dbReference type="Gene3D" id="3.40.50.300">
    <property type="entry name" value="P-loop containing nucleotide triphosphate hydrolases"/>
    <property type="match status" value="4"/>
</dbReference>
<dbReference type="Gene3D" id="1.10.3380.10">
    <property type="entry name" value="Sec63 N-terminal domain-like domain"/>
    <property type="match status" value="2"/>
</dbReference>
<dbReference type="Gene3D" id="1.10.10.10">
    <property type="entry name" value="Winged helix-like DNA-binding domain superfamily/Winged helix DNA-binding domain"/>
    <property type="match status" value="2"/>
</dbReference>
<dbReference type="InterPro" id="IPR003593">
    <property type="entry name" value="AAA+_ATPase"/>
</dbReference>
<dbReference type="InterPro" id="IPR035892">
    <property type="entry name" value="C2_domain_sf"/>
</dbReference>
<dbReference type="InterPro" id="IPR011545">
    <property type="entry name" value="DEAD/DEAH_box_helicase_dom"/>
</dbReference>
<dbReference type="InterPro" id="IPR050474">
    <property type="entry name" value="Hel308_SKI2-like"/>
</dbReference>
<dbReference type="InterPro" id="IPR014001">
    <property type="entry name" value="Helicase_ATP-bd"/>
</dbReference>
<dbReference type="InterPro" id="IPR001650">
    <property type="entry name" value="Helicase_C-like"/>
</dbReference>
<dbReference type="InterPro" id="IPR014756">
    <property type="entry name" value="Ig_E-set"/>
</dbReference>
<dbReference type="InterPro" id="IPR027417">
    <property type="entry name" value="P-loop_NTPase"/>
</dbReference>
<dbReference type="InterPro" id="IPR004179">
    <property type="entry name" value="Sec63-dom"/>
</dbReference>
<dbReference type="InterPro" id="IPR036388">
    <property type="entry name" value="WH-like_DNA-bd_sf"/>
</dbReference>
<dbReference type="InterPro" id="IPR036390">
    <property type="entry name" value="WH_DNA-bd_sf"/>
</dbReference>
<dbReference type="PANTHER" id="PTHR47961:SF13">
    <property type="entry name" value="ACTIVATING SIGNAL COINTEGRATOR 1 COMPLEX SUBUNIT 3"/>
    <property type="match status" value="1"/>
</dbReference>
<dbReference type="PANTHER" id="PTHR47961">
    <property type="entry name" value="DNA POLYMERASE THETA, PUTATIVE (AFU_ORTHOLOGUE AFUA_1G05260)-RELATED"/>
    <property type="match status" value="1"/>
</dbReference>
<dbReference type="Pfam" id="PF00270">
    <property type="entry name" value="DEAD"/>
    <property type="match status" value="2"/>
</dbReference>
<dbReference type="Pfam" id="PF00271">
    <property type="entry name" value="Helicase_C"/>
    <property type="match status" value="2"/>
</dbReference>
<dbReference type="Pfam" id="PF02889">
    <property type="entry name" value="Sec63"/>
    <property type="match status" value="2"/>
</dbReference>
<dbReference type="Pfam" id="PF23445">
    <property type="entry name" value="SNRNP200_wHTH"/>
    <property type="match status" value="2"/>
</dbReference>
<dbReference type="PIRSF" id="PIRSF039073">
    <property type="entry name" value="BRR2"/>
    <property type="match status" value="1"/>
</dbReference>
<dbReference type="SMART" id="SM00382">
    <property type="entry name" value="AAA"/>
    <property type="match status" value="2"/>
</dbReference>
<dbReference type="SMART" id="SM00487">
    <property type="entry name" value="DEXDc"/>
    <property type="match status" value="2"/>
</dbReference>
<dbReference type="SMART" id="SM00490">
    <property type="entry name" value="HELICc"/>
    <property type="match status" value="2"/>
</dbReference>
<dbReference type="SMART" id="SM00973">
    <property type="entry name" value="Sec63"/>
    <property type="match status" value="2"/>
</dbReference>
<dbReference type="SUPFAM" id="SSF81296">
    <property type="entry name" value="E set domains"/>
    <property type="match status" value="1"/>
</dbReference>
<dbReference type="SUPFAM" id="SSF52540">
    <property type="entry name" value="P-loop containing nucleoside triphosphate hydrolases"/>
    <property type="match status" value="4"/>
</dbReference>
<dbReference type="SUPFAM" id="SSF158702">
    <property type="entry name" value="Sec63 N-terminal domain-like"/>
    <property type="match status" value="2"/>
</dbReference>
<dbReference type="SUPFAM" id="SSF46785">
    <property type="entry name" value="Winged helix' DNA-binding domain"/>
    <property type="match status" value="2"/>
</dbReference>
<dbReference type="PROSITE" id="PS51192">
    <property type="entry name" value="HELICASE_ATP_BIND_1"/>
    <property type="match status" value="2"/>
</dbReference>
<dbReference type="PROSITE" id="PS51194">
    <property type="entry name" value="HELICASE_CTER"/>
    <property type="match status" value="2"/>
</dbReference>
<keyword id="KW-0007">Acetylation</keyword>
<keyword id="KW-0025">Alternative splicing</keyword>
<keyword id="KW-0067">ATP-binding</keyword>
<keyword id="KW-0175">Coiled coil</keyword>
<keyword id="KW-0963">Cytoplasm</keyword>
<keyword id="KW-0227">DNA damage</keyword>
<keyword id="KW-0234">DNA repair</keyword>
<keyword id="KW-0347">Helicase</keyword>
<keyword id="KW-0378">Hydrolase</keyword>
<keyword id="KW-0413">Isomerase</keyword>
<keyword id="KW-0547">Nucleotide-binding</keyword>
<keyword id="KW-0539">Nucleus</keyword>
<keyword id="KW-0597">Phosphoprotein</keyword>
<keyword id="KW-1185">Reference proteome</keyword>
<keyword id="KW-0677">Repeat</keyword>
<name>ASCC3_MOUSE</name>